<name>PTAS_STAAR</name>
<accession>Q6GJ80</accession>
<dbReference type="EC" id="2.3.1.8"/>
<dbReference type="EMBL" id="BX571856">
    <property type="protein sequence ID" value="CAG39614.1"/>
    <property type="molecule type" value="Genomic_DNA"/>
</dbReference>
<dbReference type="RefSeq" id="WP_000774291.1">
    <property type="nucleotide sequence ID" value="NC_002952.2"/>
</dbReference>
<dbReference type="PDB" id="4E4R">
    <property type="method" value="X-ray"/>
    <property type="resolution" value="1.44 A"/>
    <property type="chains" value="A=1-328"/>
</dbReference>
<dbReference type="PDBsum" id="4E4R"/>
<dbReference type="SMR" id="Q6GJ80"/>
<dbReference type="KEGG" id="sar:SAR0594"/>
<dbReference type="HOGENOM" id="CLU_019723_0_1_9"/>
<dbReference type="BRENDA" id="2.3.1.8">
    <property type="organism ID" value="3352"/>
</dbReference>
<dbReference type="UniPathway" id="UPA00340">
    <property type="reaction ID" value="UER00459"/>
</dbReference>
<dbReference type="EvolutionaryTrace" id="Q6GJ80"/>
<dbReference type="Proteomes" id="UP000000596">
    <property type="component" value="Chromosome"/>
</dbReference>
<dbReference type="GO" id="GO:0005737">
    <property type="term" value="C:cytoplasm"/>
    <property type="evidence" value="ECO:0007669"/>
    <property type="project" value="UniProtKB-SubCell"/>
</dbReference>
<dbReference type="GO" id="GO:0008959">
    <property type="term" value="F:phosphate acetyltransferase activity"/>
    <property type="evidence" value="ECO:0007669"/>
    <property type="project" value="UniProtKB-EC"/>
</dbReference>
<dbReference type="GO" id="GO:0006085">
    <property type="term" value="P:acetyl-CoA biosynthetic process"/>
    <property type="evidence" value="ECO:0007669"/>
    <property type="project" value="UniProtKB-UniPathway"/>
</dbReference>
<dbReference type="Gene3D" id="3.40.50.10950">
    <property type="match status" value="1"/>
</dbReference>
<dbReference type="Gene3D" id="3.40.50.10750">
    <property type="entry name" value="Isocitrate/Isopropylmalate dehydrogenase-like"/>
    <property type="match status" value="1"/>
</dbReference>
<dbReference type="InterPro" id="IPR012147">
    <property type="entry name" value="P_Ac_Bu_trans"/>
</dbReference>
<dbReference type="InterPro" id="IPR004614">
    <property type="entry name" value="P_AcTrfase"/>
</dbReference>
<dbReference type="InterPro" id="IPR042113">
    <property type="entry name" value="P_AcTrfase_dom1"/>
</dbReference>
<dbReference type="InterPro" id="IPR042112">
    <property type="entry name" value="P_AcTrfase_dom2"/>
</dbReference>
<dbReference type="InterPro" id="IPR050500">
    <property type="entry name" value="Phos_Acetyltrans/Butyryltrans"/>
</dbReference>
<dbReference type="InterPro" id="IPR002505">
    <property type="entry name" value="PTA_PTB"/>
</dbReference>
<dbReference type="NCBIfam" id="NF007233">
    <property type="entry name" value="PRK09653.1"/>
    <property type="match status" value="1"/>
</dbReference>
<dbReference type="NCBIfam" id="TIGR00651">
    <property type="entry name" value="pta"/>
    <property type="match status" value="1"/>
</dbReference>
<dbReference type="PANTHER" id="PTHR43356">
    <property type="entry name" value="PHOSPHATE ACETYLTRANSFERASE"/>
    <property type="match status" value="1"/>
</dbReference>
<dbReference type="PANTHER" id="PTHR43356:SF3">
    <property type="entry name" value="PHOSPHATE ACETYLTRANSFERASE"/>
    <property type="match status" value="1"/>
</dbReference>
<dbReference type="Pfam" id="PF01515">
    <property type="entry name" value="PTA_PTB"/>
    <property type="match status" value="1"/>
</dbReference>
<dbReference type="PIRSF" id="PIRSF000428">
    <property type="entry name" value="P_Ac_trans"/>
    <property type="match status" value="1"/>
</dbReference>
<dbReference type="SUPFAM" id="SSF53659">
    <property type="entry name" value="Isocitrate/Isopropylmalate dehydrogenase-like"/>
    <property type="match status" value="1"/>
</dbReference>
<reference key="1">
    <citation type="journal article" date="2004" name="Proc. Natl. Acad. Sci. U.S.A.">
        <title>Complete genomes of two clinical Staphylococcus aureus strains: evidence for the rapid evolution of virulence and drug resistance.</title>
        <authorList>
            <person name="Holden M.T.G."/>
            <person name="Feil E.J."/>
            <person name="Lindsay J.A."/>
            <person name="Peacock S.J."/>
            <person name="Day N.P.J."/>
            <person name="Enright M.C."/>
            <person name="Foster T.J."/>
            <person name="Moore C.E."/>
            <person name="Hurst L."/>
            <person name="Atkin R."/>
            <person name="Barron A."/>
            <person name="Bason N."/>
            <person name="Bentley S.D."/>
            <person name="Chillingworth C."/>
            <person name="Chillingworth T."/>
            <person name="Churcher C."/>
            <person name="Clark L."/>
            <person name="Corton C."/>
            <person name="Cronin A."/>
            <person name="Doggett J."/>
            <person name="Dowd L."/>
            <person name="Feltwell T."/>
            <person name="Hance Z."/>
            <person name="Harris B."/>
            <person name="Hauser H."/>
            <person name="Holroyd S."/>
            <person name="Jagels K."/>
            <person name="James K.D."/>
            <person name="Lennard N."/>
            <person name="Line A."/>
            <person name="Mayes R."/>
            <person name="Moule S."/>
            <person name="Mungall K."/>
            <person name="Ormond D."/>
            <person name="Quail M.A."/>
            <person name="Rabbinowitsch E."/>
            <person name="Rutherford K.M."/>
            <person name="Sanders M."/>
            <person name="Sharp S."/>
            <person name="Simmonds M."/>
            <person name="Stevens K."/>
            <person name="Whitehead S."/>
            <person name="Barrell B.G."/>
            <person name="Spratt B.G."/>
            <person name="Parkhill J."/>
        </authorList>
    </citation>
    <scope>NUCLEOTIDE SEQUENCE [LARGE SCALE GENOMIC DNA]</scope>
    <source>
        <strain>MRSA252</strain>
    </source>
</reference>
<feature type="chain" id="PRO_0000179143" description="Phosphate acetyltransferase">
    <location>
        <begin position="1"/>
        <end position="328"/>
    </location>
</feature>
<feature type="helix" evidence="2">
    <location>
        <begin position="1"/>
        <end position="12"/>
    </location>
</feature>
<feature type="strand" evidence="2">
    <location>
        <begin position="17"/>
        <end position="21"/>
    </location>
</feature>
<feature type="helix" evidence="2">
    <location>
        <begin position="27"/>
        <end position="37"/>
    </location>
</feature>
<feature type="strand" evidence="2">
    <location>
        <begin position="39"/>
        <end position="48"/>
    </location>
</feature>
<feature type="helix" evidence="2">
    <location>
        <begin position="50"/>
        <end position="59"/>
    </location>
</feature>
<feature type="strand" evidence="2">
    <location>
        <begin position="67"/>
        <end position="70"/>
    </location>
</feature>
<feature type="helix" evidence="2">
    <location>
        <begin position="72"/>
        <end position="74"/>
    </location>
</feature>
<feature type="helix" evidence="2">
    <location>
        <begin position="78"/>
        <end position="88"/>
    </location>
</feature>
<feature type="turn" evidence="2">
    <location>
        <begin position="89"/>
        <end position="91"/>
    </location>
</feature>
<feature type="helix" evidence="2">
    <location>
        <begin position="95"/>
        <end position="101"/>
    </location>
</feature>
<feature type="helix" evidence="2">
    <location>
        <begin position="105"/>
        <end position="114"/>
    </location>
</feature>
<feature type="strand" evidence="2">
    <location>
        <begin position="119"/>
        <end position="123"/>
    </location>
</feature>
<feature type="helix" evidence="2">
    <location>
        <begin position="133"/>
        <end position="139"/>
    </location>
</feature>
<feature type="strand" evidence="2">
    <location>
        <begin position="150"/>
        <end position="157"/>
    </location>
</feature>
<feature type="strand" evidence="2">
    <location>
        <begin position="160"/>
        <end position="169"/>
    </location>
</feature>
<feature type="helix" evidence="2">
    <location>
        <begin position="175"/>
        <end position="191"/>
    </location>
</feature>
<feature type="strand" evidence="2">
    <location>
        <begin position="197"/>
        <end position="201"/>
    </location>
</feature>
<feature type="strand" evidence="2">
    <location>
        <begin position="203"/>
        <end position="205"/>
    </location>
</feature>
<feature type="helix" evidence="2">
    <location>
        <begin position="212"/>
        <end position="230"/>
    </location>
</feature>
<feature type="strand" evidence="2">
    <location>
        <begin position="236"/>
        <end position="241"/>
    </location>
</feature>
<feature type="helix" evidence="2">
    <location>
        <begin position="243"/>
        <end position="247"/>
    </location>
</feature>
<feature type="helix" evidence="2">
    <location>
        <begin position="249"/>
        <end position="255"/>
    </location>
</feature>
<feature type="strand" evidence="2">
    <location>
        <begin position="267"/>
        <end position="269"/>
    </location>
</feature>
<feature type="helix" evidence="2">
    <location>
        <begin position="273"/>
        <end position="285"/>
    </location>
</feature>
<feature type="strand" evidence="2">
    <location>
        <begin position="290"/>
        <end position="297"/>
    </location>
</feature>
<feature type="strand" evidence="2">
    <location>
        <begin position="299"/>
        <end position="301"/>
    </location>
</feature>
<feature type="strand" evidence="2">
    <location>
        <begin position="303"/>
        <end position="305"/>
    </location>
</feature>
<feature type="helix" evidence="2">
    <location>
        <begin position="312"/>
        <end position="326"/>
    </location>
</feature>
<evidence type="ECO:0000305" key="1"/>
<evidence type="ECO:0007829" key="2">
    <source>
        <dbReference type="PDB" id="4E4R"/>
    </source>
</evidence>
<keyword id="KW-0002">3D-structure</keyword>
<keyword id="KW-0012">Acyltransferase</keyword>
<keyword id="KW-0963">Cytoplasm</keyword>
<keyword id="KW-0808">Transferase</keyword>
<proteinExistence type="evidence at protein level"/>
<organism>
    <name type="scientific">Staphylococcus aureus (strain MRSA252)</name>
    <dbReference type="NCBI Taxonomy" id="282458"/>
    <lineage>
        <taxon>Bacteria</taxon>
        <taxon>Bacillati</taxon>
        <taxon>Bacillota</taxon>
        <taxon>Bacilli</taxon>
        <taxon>Bacillales</taxon>
        <taxon>Staphylococcaceae</taxon>
        <taxon>Staphylococcus</taxon>
    </lineage>
</organism>
<gene>
    <name type="primary">pta</name>
    <name type="ordered locus">SAR0594</name>
</gene>
<comment type="catalytic activity">
    <reaction>
        <text>acetyl-CoA + phosphate = acetyl phosphate + CoA</text>
        <dbReference type="Rhea" id="RHEA:19521"/>
        <dbReference type="ChEBI" id="CHEBI:22191"/>
        <dbReference type="ChEBI" id="CHEBI:43474"/>
        <dbReference type="ChEBI" id="CHEBI:57287"/>
        <dbReference type="ChEBI" id="CHEBI:57288"/>
        <dbReference type="EC" id="2.3.1.8"/>
    </reaction>
</comment>
<comment type="pathway">
    <text>Metabolic intermediate biosynthesis; acetyl-CoA biosynthesis; acetyl-CoA from acetate: step 2/2.</text>
</comment>
<comment type="subcellular location">
    <subcellularLocation>
        <location evidence="1">Cytoplasm</location>
    </subcellularLocation>
</comment>
<comment type="similarity">
    <text evidence="1">Belongs to the phosphate acetyltransferase and butyryltransferase family.</text>
</comment>
<protein>
    <recommendedName>
        <fullName>Phosphate acetyltransferase</fullName>
        <ecNumber>2.3.1.8</ecNumber>
    </recommendedName>
    <alternativeName>
        <fullName>Phosphotransacetylase</fullName>
    </alternativeName>
</protein>
<sequence>MADLLNVLKDKLSGKNVKIVLPEGEDERVLTAATQLQATDYVTPIVLGDETKVQSLAQKLNLDISNIELINPATSELKAELVQSFVERRKGKTTEEQAQELLNNVNYFGTMLVYAGKADGLVSGAAHSTGDTVRPALQIIKTKPGVSRTSGIFFMIKGDEQYIFGDCAINPELDSQGLAEIAVESAKSALSFGMDPKVAMLSFSTKGSAKSDDVTKVQEAVKLAQQKAEEEKLEAIIDGEFQFDAAIVPGVAEKKAPGAKLQGDANVFVFPSLEAGNIGYKIAQRLGGYDAVGPVLQGLNSPVNDLSRGCSIEDVYNLSFITAAQALQ</sequence>